<evidence type="ECO:0000255" key="1">
    <source>
        <dbReference type="HAMAP-Rule" id="MF_00106"/>
    </source>
</evidence>
<accession>B4T5P6</accession>
<gene>
    <name evidence="1" type="primary">uxuA</name>
    <name type="ordered locus">SNSL254_A3387</name>
</gene>
<name>UXUA_SALNS</name>
<sequence length="394" mass="44951">MKQTWRWYGPNDPVTLSDVRQAGATGVVTALHHIPNGEIWSIDEIQKRKAIVEEAGLEWSVVESVPIHEDIKTHTGQYDLWIKNYQQTLRNLAQCGIYTVCYNFMPVLDWTRTDLEYVLPDGSKALRFDQIEFAAFELHILKRPGAEADYTAEEIAQAERRFATMSEEDKARLTRNIIAGLPGAEEGYTLDQFRQHLATYKDIDKAKLREHFAYFLKAIIPVADEVGVRMAVHPDDPPRPILGLPRIVSTIEDMQWMVETVNSMANGFTMCTGSYGVRADNDLVDMIKQFGPRIYFTHLRSTLREENPKTFHEAAHLHGDVDMYEVVKAIVEEEHRRKAEGSDDLIPMRPDHGHQMLDDLKKKTNPGYSAIGRLKGLAEVRGVELAIQRAFFSK</sequence>
<reference key="1">
    <citation type="journal article" date="2011" name="J. Bacteriol.">
        <title>Comparative genomics of 28 Salmonella enterica isolates: evidence for CRISPR-mediated adaptive sublineage evolution.</title>
        <authorList>
            <person name="Fricke W.F."/>
            <person name="Mammel M.K."/>
            <person name="McDermott P.F."/>
            <person name="Tartera C."/>
            <person name="White D.G."/>
            <person name="Leclerc J.E."/>
            <person name="Ravel J."/>
            <person name="Cebula T.A."/>
        </authorList>
    </citation>
    <scope>NUCLEOTIDE SEQUENCE [LARGE SCALE GENOMIC DNA]</scope>
    <source>
        <strain>SL254</strain>
    </source>
</reference>
<feature type="chain" id="PRO_1000094222" description="Mannonate dehydratase">
    <location>
        <begin position="1"/>
        <end position="394"/>
    </location>
</feature>
<proteinExistence type="inferred from homology"/>
<organism>
    <name type="scientific">Salmonella newport (strain SL254)</name>
    <dbReference type="NCBI Taxonomy" id="423368"/>
    <lineage>
        <taxon>Bacteria</taxon>
        <taxon>Pseudomonadati</taxon>
        <taxon>Pseudomonadota</taxon>
        <taxon>Gammaproteobacteria</taxon>
        <taxon>Enterobacterales</taxon>
        <taxon>Enterobacteriaceae</taxon>
        <taxon>Salmonella</taxon>
    </lineage>
</organism>
<protein>
    <recommendedName>
        <fullName evidence="1">Mannonate dehydratase</fullName>
        <ecNumber evidence="1">4.2.1.8</ecNumber>
    </recommendedName>
    <alternativeName>
        <fullName evidence="1">D-mannonate hydro-lyase</fullName>
    </alternativeName>
</protein>
<comment type="function">
    <text evidence="1">Catalyzes the dehydration of D-mannonate.</text>
</comment>
<comment type="catalytic activity">
    <reaction evidence="1">
        <text>D-mannonate = 2-dehydro-3-deoxy-D-gluconate + H2O</text>
        <dbReference type="Rhea" id="RHEA:20097"/>
        <dbReference type="ChEBI" id="CHEBI:15377"/>
        <dbReference type="ChEBI" id="CHEBI:17767"/>
        <dbReference type="ChEBI" id="CHEBI:57990"/>
        <dbReference type="EC" id="4.2.1.8"/>
    </reaction>
</comment>
<comment type="cofactor">
    <cofactor evidence="1">
        <name>Fe(2+)</name>
        <dbReference type="ChEBI" id="CHEBI:29033"/>
    </cofactor>
    <cofactor evidence="1">
        <name>Mn(2+)</name>
        <dbReference type="ChEBI" id="CHEBI:29035"/>
    </cofactor>
</comment>
<comment type="pathway">
    <text evidence="1">Carbohydrate metabolism; pentose and glucuronate interconversion.</text>
</comment>
<comment type="similarity">
    <text evidence="1">Belongs to the mannonate dehydratase family.</text>
</comment>
<keyword id="KW-0408">Iron</keyword>
<keyword id="KW-0456">Lyase</keyword>
<keyword id="KW-0464">Manganese</keyword>
<dbReference type="EC" id="4.2.1.8" evidence="1"/>
<dbReference type="EMBL" id="CP001113">
    <property type="protein sequence ID" value="ACF65052.1"/>
    <property type="molecule type" value="Genomic_DNA"/>
</dbReference>
<dbReference type="RefSeq" id="WP_000815479.1">
    <property type="nucleotide sequence ID" value="NZ_CCMR01000001.1"/>
</dbReference>
<dbReference type="SMR" id="B4T5P6"/>
<dbReference type="KEGG" id="see:SNSL254_A3387"/>
<dbReference type="HOGENOM" id="CLU_058621_2_0_6"/>
<dbReference type="UniPathway" id="UPA00246"/>
<dbReference type="Proteomes" id="UP000008824">
    <property type="component" value="Chromosome"/>
</dbReference>
<dbReference type="GO" id="GO:0008198">
    <property type="term" value="F:ferrous iron binding"/>
    <property type="evidence" value="ECO:0007669"/>
    <property type="project" value="TreeGrafter"/>
</dbReference>
<dbReference type="GO" id="GO:0030145">
    <property type="term" value="F:manganese ion binding"/>
    <property type="evidence" value="ECO:0007669"/>
    <property type="project" value="TreeGrafter"/>
</dbReference>
<dbReference type="GO" id="GO:0008927">
    <property type="term" value="F:mannonate dehydratase activity"/>
    <property type="evidence" value="ECO:0007669"/>
    <property type="project" value="UniProtKB-UniRule"/>
</dbReference>
<dbReference type="GO" id="GO:0042840">
    <property type="term" value="P:D-glucuronate catabolic process"/>
    <property type="evidence" value="ECO:0007669"/>
    <property type="project" value="TreeGrafter"/>
</dbReference>
<dbReference type="FunFam" id="3.20.20.150:FF:000004">
    <property type="entry name" value="Mannonate dehydratase"/>
    <property type="match status" value="1"/>
</dbReference>
<dbReference type="FunFam" id="3.20.20.150:FF:000005">
    <property type="entry name" value="Mannonate dehydratase"/>
    <property type="match status" value="1"/>
</dbReference>
<dbReference type="Gene3D" id="3.20.20.150">
    <property type="entry name" value="Divalent-metal-dependent TIM barrel enzymes"/>
    <property type="match status" value="2"/>
</dbReference>
<dbReference type="HAMAP" id="MF_00106">
    <property type="entry name" value="UxuA"/>
    <property type="match status" value="1"/>
</dbReference>
<dbReference type="InterPro" id="IPR004628">
    <property type="entry name" value="Man_deHydtase"/>
</dbReference>
<dbReference type="InterPro" id="IPR036237">
    <property type="entry name" value="Xyl_isomerase-like_sf"/>
</dbReference>
<dbReference type="NCBIfam" id="NF003027">
    <property type="entry name" value="PRK03906.1"/>
    <property type="match status" value="1"/>
</dbReference>
<dbReference type="NCBIfam" id="TIGR00695">
    <property type="entry name" value="uxuA"/>
    <property type="match status" value="1"/>
</dbReference>
<dbReference type="PANTHER" id="PTHR30387">
    <property type="entry name" value="MANNONATE DEHYDRATASE"/>
    <property type="match status" value="1"/>
</dbReference>
<dbReference type="PANTHER" id="PTHR30387:SF2">
    <property type="entry name" value="MANNONATE DEHYDRATASE"/>
    <property type="match status" value="1"/>
</dbReference>
<dbReference type="Pfam" id="PF03786">
    <property type="entry name" value="UxuA"/>
    <property type="match status" value="1"/>
</dbReference>
<dbReference type="PIRSF" id="PIRSF016049">
    <property type="entry name" value="Man_dehyd"/>
    <property type="match status" value="1"/>
</dbReference>
<dbReference type="SUPFAM" id="SSF51658">
    <property type="entry name" value="Xylose isomerase-like"/>
    <property type="match status" value="1"/>
</dbReference>